<keyword id="KW-0012">Acyltransferase</keyword>
<keyword id="KW-0963">Cytoplasm</keyword>
<keyword id="KW-0221">Differentiation</keyword>
<keyword id="KW-0276">Fatty acid metabolism</keyword>
<keyword id="KW-0444">Lipid biosynthesis</keyword>
<keyword id="KW-0551">Lipid droplet</keyword>
<keyword id="KW-0443">Lipid metabolism</keyword>
<keyword id="KW-0594">Phospholipid biosynthesis</keyword>
<keyword id="KW-1208">Phospholipid metabolism</keyword>
<keyword id="KW-0597">Phosphoprotein</keyword>
<keyword id="KW-1185">Reference proteome</keyword>
<keyword id="KW-0808">Transferase</keyword>
<evidence type="ECO:0000250" key="1"/>
<evidence type="ECO:0000250" key="2">
    <source>
        <dbReference type="UniProtKB" id="Q8WTS1"/>
    </source>
</evidence>
<evidence type="ECO:0000250" key="3">
    <source>
        <dbReference type="UniProtKB" id="Q9DBL9"/>
    </source>
</evidence>
<evidence type="ECO:0000255" key="4"/>
<evidence type="ECO:0000269" key="5">
    <source>
    </source>
</evidence>
<evidence type="ECO:0000269" key="6">
    <source>
    </source>
</evidence>
<evidence type="ECO:0000305" key="7"/>
<evidence type="ECO:0000312" key="8">
    <source>
        <dbReference type="RGD" id="1303237"/>
    </source>
</evidence>
<evidence type="ECO:0007744" key="9">
    <source>
    </source>
</evidence>
<comment type="function">
    <text evidence="2 3">Coenzyme A-dependent lysophosphatidic acid acyltransferase that catalyzes the transfer of an acyl group on a lysophosphatidic acid. Functions preferentially with 1-oleoyl-lysophosphatidic acid followed by 1-palmitoyl-lysophosphatidic acid, 1-stearoyl-lysophosphatidic acid and 1-arachidonoyl-lysophosphatidic acid as lipid acceptor. Functions preferentially with arachidonoyl-CoA followed by oleoyl-CoA as acyl group donors (By similarity). Functions in phosphatidic acid biosynthesis (By similarity). May regulate the cellular storage of triacylglycerol through activation of the phospholipase PNPLA2 (By similarity). Involved in keratinocyte differentiation (By similarity). Regulates lipid droplet fusion (By similarity).</text>
</comment>
<comment type="catalytic activity">
    <reaction evidence="2">
        <text>a 1-acyl-sn-glycero-3-phosphate + an acyl-CoA = a 1,2-diacyl-sn-glycero-3-phosphate + CoA</text>
        <dbReference type="Rhea" id="RHEA:19709"/>
        <dbReference type="ChEBI" id="CHEBI:57287"/>
        <dbReference type="ChEBI" id="CHEBI:57970"/>
        <dbReference type="ChEBI" id="CHEBI:58342"/>
        <dbReference type="ChEBI" id="CHEBI:58608"/>
        <dbReference type="EC" id="2.3.1.51"/>
    </reaction>
    <physiologicalReaction direction="left-to-right" evidence="2">
        <dbReference type="Rhea" id="RHEA:19710"/>
    </physiologicalReaction>
</comment>
<comment type="catalytic activity">
    <reaction evidence="3">
        <text>1-(9Z-octadecenoyl)-sn-glycero-3-phosphate + (9Z)-octadecenoyl-CoA = 1,2-di-(9Z-octadecenoyl)-sn-glycero-3-phosphate + CoA</text>
        <dbReference type="Rhea" id="RHEA:37131"/>
        <dbReference type="ChEBI" id="CHEBI:57287"/>
        <dbReference type="ChEBI" id="CHEBI:57387"/>
        <dbReference type="ChEBI" id="CHEBI:74544"/>
        <dbReference type="ChEBI" id="CHEBI:74546"/>
    </reaction>
    <physiologicalReaction direction="left-to-right" evidence="3">
        <dbReference type="Rhea" id="RHEA:37132"/>
    </physiologicalReaction>
</comment>
<comment type="catalytic activity">
    <reaction evidence="3">
        <text>1-(9Z-octadecenoyl)-sn-glycero-3-phosphate + hexadecanoyl-CoA = 1-(9Z)-octadecenoyl-2-hexadecanoyl-sn-glycero-3-phosphate + CoA</text>
        <dbReference type="Rhea" id="RHEA:37143"/>
        <dbReference type="ChEBI" id="CHEBI:57287"/>
        <dbReference type="ChEBI" id="CHEBI:57379"/>
        <dbReference type="ChEBI" id="CHEBI:74544"/>
        <dbReference type="ChEBI" id="CHEBI:74551"/>
    </reaction>
    <physiologicalReaction direction="left-to-right" evidence="3">
        <dbReference type="Rhea" id="RHEA:37144"/>
    </physiologicalReaction>
</comment>
<comment type="catalytic activity">
    <reaction evidence="3">
        <text>1-(9Z-octadecenoyl)-sn-glycero-3-phosphate + octadecanoyl-CoA = 1-(9Z-octadecenoyl)-2-octadecanoyl-sn-glycero-3-phosphate + CoA</text>
        <dbReference type="Rhea" id="RHEA:37147"/>
        <dbReference type="ChEBI" id="CHEBI:57287"/>
        <dbReference type="ChEBI" id="CHEBI:57394"/>
        <dbReference type="ChEBI" id="CHEBI:74544"/>
        <dbReference type="ChEBI" id="CHEBI:74552"/>
    </reaction>
    <physiologicalReaction direction="left-to-right" evidence="3">
        <dbReference type="Rhea" id="RHEA:37148"/>
    </physiologicalReaction>
</comment>
<comment type="catalytic activity">
    <reaction evidence="3">
        <text>1-(9Z-octadecenoyl)-sn-glycero-3-phosphate + (5Z,8Z,11Z,14Z)-eicosatetraenoyl-CoA = 1-(9Z)-octadecenoyl-2-(5Z,8Z,11Z,14Z)-eicosatetraenoyl-sn-glycero-3-phosphate + CoA</text>
        <dbReference type="Rhea" id="RHEA:37443"/>
        <dbReference type="ChEBI" id="CHEBI:57287"/>
        <dbReference type="ChEBI" id="CHEBI:57368"/>
        <dbReference type="ChEBI" id="CHEBI:74544"/>
        <dbReference type="ChEBI" id="CHEBI:74928"/>
    </reaction>
    <physiologicalReaction direction="left-to-right" evidence="3">
        <dbReference type="Rhea" id="RHEA:37444"/>
    </physiologicalReaction>
</comment>
<comment type="catalytic activity">
    <reaction evidence="3">
        <text>eicosanoyl-CoA + 1-(9Z-octadecenoyl)-sn-glycero-3-phosphate = 1-(9Z)-octadecenoyl-2-eicosanoyl-sn-glycero-3-phosphate + CoA</text>
        <dbReference type="Rhea" id="RHEA:37451"/>
        <dbReference type="ChEBI" id="CHEBI:57287"/>
        <dbReference type="ChEBI" id="CHEBI:57380"/>
        <dbReference type="ChEBI" id="CHEBI:74544"/>
        <dbReference type="ChEBI" id="CHEBI:74937"/>
    </reaction>
    <physiologicalReaction direction="left-to-right" evidence="3">
        <dbReference type="Rhea" id="RHEA:37452"/>
    </physiologicalReaction>
</comment>
<comment type="catalytic activity">
    <reaction evidence="3">
        <text>1-hexadecanoyl-sn-glycero-3-phosphate + (9Z)-octadecenoyl-CoA = 1-hexadecanoyl-2-(9Z-octadecenoyl)-sn-glycero-3-phosphate + CoA</text>
        <dbReference type="Rhea" id="RHEA:33187"/>
        <dbReference type="ChEBI" id="CHEBI:57287"/>
        <dbReference type="ChEBI" id="CHEBI:57387"/>
        <dbReference type="ChEBI" id="CHEBI:57518"/>
        <dbReference type="ChEBI" id="CHEBI:64839"/>
    </reaction>
    <physiologicalReaction direction="left-to-right" evidence="3">
        <dbReference type="Rhea" id="RHEA:33188"/>
    </physiologicalReaction>
</comment>
<comment type="catalytic activity">
    <reaction evidence="3">
        <text>1-octadecanoyl-sn-glycero-3-phosphate + (9Z)-octadecenoyl-CoA = 1-octadecanoyl-2-(9Z-octadecenoyl)-sn-glycero-3-phosphate + CoA</text>
        <dbReference type="Rhea" id="RHEA:37163"/>
        <dbReference type="ChEBI" id="CHEBI:57287"/>
        <dbReference type="ChEBI" id="CHEBI:57387"/>
        <dbReference type="ChEBI" id="CHEBI:74560"/>
        <dbReference type="ChEBI" id="CHEBI:74565"/>
    </reaction>
    <physiologicalReaction direction="left-to-right" evidence="3">
        <dbReference type="Rhea" id="RHEA:37164"/>
    </physiologicalReaction>
</comment>
<comment type="catalytic activity">
    <reaction evidence="3">
        <text>1-(5Z,8Z,11Z,14Z-eicosatetraenoyl)-sn-glycero-3-phosphate + (9Z)-octadecenoyl-CoA = 1-(5Z,8Z,11Z,14Z)-eicosatetraenoyl-2-(9Z)-octadecenoyl-sn-glycero-3-phosphate + CoA</text>
        <dbReference type="Rhea" id="RHEA:37455"/>
        <dbReference type="ChEBI" id="CHEBI:57287"/>
        <dbReference type="ChEBI" id="CHEBI:57387"/>
        <dbReference type="ChEBI" id="CHEBI:74938"/>
        <dbReference type="ChEBI" id="CHEBI:74941"/>
    </reaction>
    <physiologicalReaction direction="left-to-right" evidence="3">
        <dbReference type="Rhea" id="RHEA:37456"/>
    </physiologicalReaction>
</comment>
<comment type="activity regulation">
    <text evidence="3">Acyltransferase activity is inhibited by detergents such as Triton X-100 and 3-[(3-cholamidopropyl)dimethylammonio]-1-propanesulfonate (CHAPS). Acyltransferase activity is inhibited by the presence of magnesium and calcium.</text>
</comment>
<comment type="subunit">
    <text evidence="1 5 6">Interacts with ADRP and PLIN. Interacts with PNPLA2 (By similarity). Interacts with PLIN5; promotes interaction with PNPLA2.</text>
</comment>
<comment type="subcellular location">
    <subcellularLocation>
        <location evidence="5">Cytoplasm</location>
    </subcellularLocation>
    <subcellularLocation>
        <location evidence="5">Lipid droplet</location>
    </subcellularLocation>
    <text>Colocalized with PLIN and ADRP on the surface of lipid droplets. The localization is dependent upon the metabolic status of the adipocytes and the activity of PKA.</text>
</comment>
<comment type="induction">
    <text evidence="5">Increased in the early stage of adipocyte differentiation.</text>
</comment>
<comment type="domain">
    <text>The HXXXXD motif is essential for acyltransferase activity and may constitute the binding site for the phosphate moiety of the glycerol-3-phosphate.</text>
</comment>
<comment type="similarity">
    <text evidence="7">Belongs to the peptidase S33 family. ABHD4/ABHD5 subfamily.</text>
</comment>
<accession>Q6QA69</accession>
<gene>
    <name evidence="8" type="primary">Abhd5</name>
</gene>
<name>ABHD5_RAT</name>
<protein>
    <recommendedName>
        <fullName evidence="7">1-acylglycerol-3-phosphate O-acyltransferase ABHD5</fullName>
        <ecNumber evidence="2">2.3.1.51</ecNumber>
    </recommendedName>
    <alternativeName>
        <fullName>Abhydrolase domain-containing protein 5</fullName>
    </alternativeName>
    <alternativeName>
        <fullName>Lipid droplet-binding protein CGI-58</fullName>
        <shortName>Protein CGI-58</shortName>
    </alternativeName>
</protein>
<organism>
    <name type="scientific">Rattus norvegicus</name>
    <name type="common">Rat</name>
    <dbReference type="NCBI Taxonomy" id="10116"/>
    <lineage>
        <taxon>Eukaryota</taxon>
        <taxon>Metazoa</taxon>
        <taxon>Chordata</taxon>
        <taxon>Craniata</taxon>
        <taxon>Vertebrata</taxon>
        <taxon>Euteleostomi</taxon>
        <taxon>Mammalia</taxon>
        <taxon>Eutheria</taxon>
        <taxon>Euarchontoglires</taxon>
        <taxon>Glires</taxon>
        <taxon>Rodentia</taxon>
        <taxon>Myomorpha</taxon>
        <taxon>Muroidea</taxon>
        <taxon>Muridae</taxon>
        <taxon>Murinae</taxon>
        <taxon>Rattus</taxon>
    </lineage>
</organism>
<sequence>MKAMAAEEEVDSADAGGGSGWLTGWLPTWCPTSTSHLKEAEEKMLKCVPCTYKKEPVRISNGNSIWTLMFSHNMSSKTPLVLLHGFGGGLGLWALNFEDLSTDRPVYAFDLLGFGRSSRPRFDSDAEEVENQFVESIEEWRCALRLDKMILLGHNLGGFLAAAYSLKYPSRVSHLILVEPWGFPERPDLADQERPIPVWIRALGAALTPFNPLAGLRIAGPFGLSLVQRLRPDFKRKYSSMFEDDTVTEYIYHCNVQTPSGETAFKNMTIPYGWAKRPMLQRIGGLHPDIPVSVIFGARSCIDGNSGTSIQSLRPKSYVKTIAILGAGHYVYADQPEEFNQKVKEICHTVD</sequence>
<dbReference type="EC" id="2.3.1.51" evidence="2"/>
<dbReference type="EMBL" id="AY550934">
    <property type="protein sequence ID" value="AAS57860.1"/>
    <property type="molecule type" value="mRNA"/>
</dbReference>
<dbReference type="RefSeq" id="NP_997689.1">
    <property type="nucleotide sequence ID" value="NM_212524.1"/>
</dbReference>
<dbReference type="SMR" id="Q6QA69"/>
<dbReference type="FunCoup" id="Q6QA69">
    <property type="interactions" value="1264"/>
</dbReference>
<dbReference type="STRING" id="10116.ENSRNOP00000000239"/>
<dbReference type="ESTHER" id="ratno-abhd5">
    <property type="family name" value="CGI-58_ABHD5_ABHD4"/>
</dbReference>
<dbReference type="MEROPS" id="S33.975"/>
<dbReference type="iPTMnet" id="Q6QA69"/>
<dbReference type="PhosphoSitePlus" id="Q6QA69"/>
<dbReference type="jPOST" id="Q6QA69"/>
<dbReference type="PaxDb" id="10116-ENSRNOP00000000239"/>
<dbReference type="GeneID" id="316122"/>
<dbReference type="KEGG" id="rno:316122"/>
<dbReference type="UCSC" id="RGD:1303237">
    <property type="organism name" value="rat"/>
</dbReference>
<dbReference type="AGR" id="RGD:1303237"/>
<dbReference type="CTD" id="51099"/>
<dbReference type="RGD" id="1303237">
    <property type="gene designation" value="Abhd5"/>
</dbReference>
<dbReference type="VEuPathDB" id="HostDB:ENSRNOG00000000221"/>
<dbReference type="eggNOG" id="KOG4409">
    <property type="taxonomic scope" value="Eukaryota"/>
</dbReference>
<dbReference type="HOGENOM" id="CLU_017361_0_0_1"/>
<dbReference type="InParanoid" id="Q6QA69"/>
<dbReference type="OrthoDB" id="7457040at2759"/>
<dbReference type="TreeFam" id="TF314196"/>
<dbReference type="PRO" id="PR:Q6QA69"/>
<dbReference type="Proteomes" id="UP000002494">
    <property type="component" value="Chromosome 8"/>
</dbReference>
<dbReference type="Bgee" id="ENSRNOG00000000221">
    <property type="expression patterns" value="Expressed in esophagus and 18 other cell types or tissues"/>
</dbReference>
<dbReference type="GO" id="GO:0005829">
    <property type="term" value="C:cytosol"/>
    <property type="evidence" value="ECO:0000250"/>
    <property type="project" value="UniProtKB"/>
</dbReference>
<dbReference type="GO" id="GO:0005811">
    <property type="term" value="C:lipid droplet"/>
    <property type="evidence" value="ECO:0000314"/>
    <property type="project" value="BHF-UCL"/>
</dbReference>
<dbReference type="GO" id="GO:0005739">
    <property type="term" value="C:mitochondrion"/>
    <property type="evidence" value="ECO:0000318"/>
    <property type="project" value="GO_Central"/>
</dbReference>
<dbReference type="GO" id="GO:0005654">
    <property type="term" value="C:nucleoplasm"/>
    <property type="evidence" value="ECO:0007669"/>
    <property type="project" value="Ensembl"/>
</dbReference>
<dbReference type="GO" id="GO:0003841">
    <property type="term" value="F:1-acylglycerol-3-phosphate O-acyltransferase activity"/>
    <property type="evidence" value="ECO:0000250"/>
    <property type="project" value="UniProtKB"/>
</dbReference>
<dbReference type="GO" id="GO:0052689">
    <property type="term" value="F:carboxylic ester hydrolase activity"/>
    <property type="evidence" value="ECO:0000318"/>
    <property type="project" value="GO_Central"/>
</dbReference>
<dbReference type="GO" id="GO:0060229">
    <property type="term" value="F:lipase activator activity"/>
    <property type="evidence" value="ECO:0000266"/>
    <property type="project" value="RGD"/>
</dbReference>
<dbReference type="GO" id="GO:0042171">
    <property type="term" value="F:lysophosphatidic acid acyltransferase activity"/>
    <property type="evidence" value="ECO:0000266"/>
    <property type="project" value="RGD"/>
</dbReference>
<dbReference type="GO" id="GO:0030154">
    <property type="term" value="P:cell differentiation"/>
    <property type="evidence" value="ECO:0007669"/>
    <property type="project" value="UniProtKB-KW"/>
</dbReference>
<dbReference type="GO" id="GO:0006631">
    <property type="term" value="P:fatty acid metabolic process"/>
    <property type="evidence" value="ECO:0007669"/>
    <property type="project" value="UniProtKB-KW"/>
</dbReference>
<dbReference type="GO" id="GO:0055088">
    <property type="term" value="P:lipid homeostasis"/>
    <property type="evidence" value="ECO:0000318"/>
    <property type="project" value="GO_Central"/>
</dbReference>
<dbReference type="GO" id="GO:0006629">
    <property type="term" value="P:lipid metabolic process"/>
    <property type="evidence" value="ECO:0000314"/>
    <property type="project" value="MGI"/>
</dbReference>
<dbReference type="GO" id="GO:0010891">
    <property type="term" value="P:negative regulation of triglyceride storage"/>
    <property type="evidence" value="ECO:0000250"/>
    <property type="project" value="UniProtKB"/>
</dbReference>
<dbReference type="GO" id="GO:0006654">
    <property type="term" value="P:phosphatidic acid biosynthetic process"/>
    <property type="evidence" value="ECO:0000250"/>
    <property type="project" value="UniProtKB"/>
</dbReference>
<dbReference type="GO" id="GO:0050996">
    <property type="term" value="P:positive regulation of lipid catabolic process"/>
    <property type="evidence" value="ECO:0000266"/>
    <property type="project" value="RGD"/>
</dbReference>
<dbReference type="GO" id="GO:0010898">
    <property type="term" value="P:positive regulation of triglyceride catabolic process"/>
    <property type="evidence" value="ECO:0000250"/>
    <property type="project" value="UniProtKB"/>
</dbReference>
<dbReference type="FunFam" id="3.40.50.1820:FF:000019">
    <property type="entry name" value="1-acylglycerol-3-phosphate O-acyltransferase ABHD5"/>
    <property type="match status" value="1"/>
</dbReference>
<dbReference type="Gene3D" id="3.40.50.1820">
    <property type="entry name" value="alpha/beta hydrolase"/>
    <property type="match status" value="1"/>
</dbReference>
<dbReference type="InterPro" id="IPR000073">
    <property type="entry name" value="AB_hydrolase_1"/>
</dbReference>
<dbReference type="InterPro" id="IPR029058">
    <property type="entry name" value="AB_hydrolase_fold"/>
</dbReference>
<dbReference type="PANTHER" id="PTHR42886:SF34">
    <property type="entry name" value="1-ACYLGLYCEROL-3-PHOSPHATE O-ACYLTRANSFERASE ABHD5"/>
    <property type="match status" value="1"/>
</dbReference>
<dbReference type="PANTHER" id="PTHR42886">
    <property type="entry name" value="RE40534P-RELATED"/>
    <property type="match status" value="1"/>
</dbReference>
<dbReference type="Pfam" id="PF00561">
    <property type="entry name" value="Abhydrolase_1"/>
    <property type="match status" value="1"/>
</dbReference>
<dbReference type="PRINTS" id="PR00111">
    <property type="entry name" value="ABHYDROLASE"/>
</dbReference>
<dbReference type="SUPFAM" id="SSF53474">
    <property type="entry name" value="alpha/beta-Hydrolases"/>
    <property type="match status" value="1"/>
</dbReference>
<reference key="1">
    <citation type="journal article" date="2004" name="J. Biol. Chem.">
        <title>CGI-58 interacts with perilipin and is localized to lipid droplets. Possible involvement of CGI-58 mislocalization in Chanarin-Dorfman syndrome.</title>
        <authorList>
            <person name="Yamaguchi T."/>
            <person name="Omatsu N."/>
            <person name="Matsushita S."/>
            <person name="Osumi T."/>
        </authorList>
    </citation>
    <scope>NUCLEOTIDE SEQUENCE [MRNA]</scope>
    <scope>INTERACTION WITH PLIN AND ADRP</scope>
    <scope>SUBCELLULAR LOCATION</scope>
    <scope>INDUCTION</scope>
    <scope>MUTAGENESIS OF GLU-9; GLN-132 AND GLU-262</scope>
</reference>
<reference key="2">
    <citation type="journal article" date="2012" name="Nat. Commun.">
        <title>Quantitative maps of protein phosphorylation sites across 14 different rat organs and tissues.</title>
        <authorList>
            <person name="Lundby A."/>
            <person name="Secher A."/>
            <person name="Lage K."/>
            <person name="Nordsborg N.B."/>
            <person name="Dmytriyev A."/>
            <person name="Lundby C."/>
            <person name="Olsen J.V."/>
        </authorList>
    </citation>
    <scope>PHOSPHORYLATION [LARGE SCALE ANALYSIS] AT SER-124</scope>
    <scope>IDENTIFICATION BY MASS SPECTROMETRY [LARGE SCALE ANALYSIS]</scope>
</reference>
<reference key="3">
    <citation type="journal article" date="2013" name="Am. J. Physiol.">
        <title>Skeletal muscle PLIN proteins, ATGL and CGI-58, interactions at rest and following stimulated contraction.</title>
        <authorList>
            <person name="MacPherson R.E."/>
            <person name="Ramos S.V."/>
            <person name="Vandenboom R."/>
            <person name="Roy B.D."/>
            <person name="Peters S.J."/>
        </authorList>
    </citation>
    <scope>INTERACTION WITH PLIN5</scope>
</reference>
<proteinExistence type="evidence at protein level"/>
<feature type="chain" id="PRO_0000080870" description="1-acylglycerol-3-phosphate O-acyltransferase ABHD5">
    <location>
        <begin position="1"/>
        <end position="351"/>
    </location>
</feature>
<feature type="domain" description="AB hydrolase-1" evidence="4">
    <location>
        <begin position="79"/>
        <end position="184"/>
    </location>
</feature>
<feature type="short sequence motif" description="HXXXXD motif">
    <location>
        <begin position="329"/>
        <end position="334"/>
    </location>
</feature>
<feature type="modified residue" description="Phosphoserine" evidence="9">
    <location>
        <position position="124"/>
    </location>
</feature>
<feature type="mutagenesis site" description="Colocalized to the lipid droplets with PLIN and ADPR." evidence="5">
    <original>E</original>
    <variation>K</variation>
    <location>
        <position position="9"/>
    </location>
</feature>
<feature type="mutagenesis site" description="Exhibits a diffuse cytoplasmic distribution without colocalization to lipid droplets with PLIN and ADPR. Loss of binding to PLIN." evidence="5">
    <original>Q</original>
    <variation>P</variation>
    <location>
        <position position="132"/>
    </location>
</feature>
<feature type="mutagenesis site" description="Exhibits a diffuse cytoplasmic distribution without colocalization to lipid droplets with PLIN and ADPR. Loss of binding to PLIN." evidence="5">
    <original>E</original>
    <variation>K</variation>
    <location>
        <position position="262"/>
    </location>
</feature>